<organism>
    <name type="scientific">Helicobacter pylori (strain P12)</name>
    <dbReference type="NCBI Taxonomy" id="570508"/>
    <lineage>
        <taxon>Bacteria</taxon>
        <taxon>Pseudomonadati</taxon>
        <taxon>Campylobacterota</taxon>
        <taxon>Epsilonproteobacteria</taxon>
        <taxon>Campylobacterales</taxon>
        <taxon>Helicobacteraceae</taxon>
        <taxon>Helicobacter</taxon>
    </lineage>
</organism>
<sequence length="377" mass="41834">MLKRASFVEVNTASLRHNFSAVKSIVPKDAHIMAVVKANAYGAGAIKASEIFLQEGANYLGVAALDEALELRSHFPKTPILILGYSPNANASMLIDNDLSAMVFSLEQAEVFSQMALKSQKRLKVHLKIDTGMHRLGLEPNFKSIETIKKIRALKGLEVEGIFTHLSNADAKIKTHAKNQMKAFNAFLEQLLDQKIEFQYRHAYNSAGILSLCNGNENRFLNLYRPGIMLYGFYPSNEMKESCPTILKNVISLKAQIVQIRSVKKGEFIGYGEHFYTNEETLVGVLALGYADGLMRALGNRIQVAINNQLAPLIGKVCMDQCFVKLNNIQAKEGDEVILFGDKSAKANDASEIAALLNTIPYETISTLSKRLERVYI</sequence>
<proteinExistence type="inferred from homology"/>
<gene>
    <name type="primary">alr</name>
    <name type="ordered locus">HPP12_0938</name>
</gene>
<protein>
    <recommendedName>
        <fullName evidence="1">Alanine racemase</fullName>
        <ecNumber evidence="1">5.1.1.1</ecNumber>
    </recommendedName>
</protein>
<name>ALR_HELP2</name>
<accession>B6JMG2</accession>
<dbReference type="EC" id="5.1.1.1" evidence="1"/>
<dbReference type="EMBL" id="CP001217">
    <property type="protein sequence ID" value="ACJ08090.1"/>
    <property type="molecule type" value="Genomic_DNA"/>
</dbReference>
<dbReference type="SMR" id="B6JMG2"/>
<dbReference type="KEGG" id="hpp:HPP12_0938"/>
<dbReference type="HOGENOM" id="CLU_028393_2_2_7"/>
<dbReference type="UniPathway" id="UPA00042">
    <property type="reaction ID" value="UER00497"/>
</dbReference>
<dbReference type="Proteomes" id="UP000008198">
    <property type="component" value="Chromosome"/>
</dbReference>
<dbReference type="GO" id="GO:0005829">
    <property type="term" value="C:cytosol"/>
    <property type="evidence" value="ECO:0007669"/>
    <property type="project" value="TreeGrafter"/>
</dbReference>
<dbReference type="GO" id="GO:0008784">
    <property type="term" value="F:alanine racemase activity"/>
    <property type="evidence" value="ECO:0007669"/>
    <property type="project" value="UniProtKB-UniRule"/>
</dbReference>
<dbReference type="GO" id="GO:0030170">
    <property type="term" value="F:pyridoxal phosphate binding"/>
    <property type="evidence" value="ECO:0007669"/>
    <property type="project" value="UniProtKB-UniRule"/>
</dbReference>
<dbReference type="GO" id="GO:0030632">
    <property type="term" value="P:D-alanine biosynthetic process"/>
    <property type="evidence" value="ECO:0007669"/>
    <property type="project" value="UniProtKB-UniRule"/>
</dbReference>
<dbReference type="CDD" id="cd00430">
    <property type="entry name" value="PLPDE_III_AR"/>
    <property type="match status" value="1"/>
</dbReference>
<dbReference type="FunFam" id="3.20.20.10:FF:000002">
    <property type="entry name" value="Alanine racemase"/>
    <property type="match status" value="1"/>
</dbReference>
<dbReference type="Gene3D" id="3.20.20.10">
    <property type="entry name" value="Alanine racemase"/>
    <property type="match status" value="1"/>
</dbReference>
<dbReference type="Gene3D" id="2.40.37.10">
    <property type="entry name" value="Lyase, Ornithine Decarboxylase, Chain A, domain 1"/>
    <property type="match status" value="1"/>
</dbReference>
<dbReference type="HAMAP" id="MF_01201">
    <property type="entry name" value="Ala_racemase"/>
    <property type="match status" value="1"/>
</dbReference>
<dbReference type="InterPro" id="IPR000821">
    <property type="entry name" value="Ala_racemase"/>
</dbReference>
<dbReference type="InterPro" id="IPR009006">
    <property type="entry name" value="Ala_racemase/Decarboxylase_C"/>
</dbReference>
<dbReference type="InterPro" id="IPR011079">
    <property type="entry name" value="Ala_racemase_C"/>
</dbReference>
<dbReference type="InterPro" id="IPR001608">
    <property type="entry name" value="Ala_racemase_N"/>
</dbReference>
<dbReference type="InterPro" id="IPR020622">
    <property type="entry name" value="Ala_racemase_pyridoxalP-BS"/>
</dbReference>
<dbReference type="InterPro" id="IPR029066">
    <property type="entry name" value="PLP-binding_barrel"/>
</dbReference>
<dbReference type="NCBIfam" id="TIGR00492">
    <property type="entry name" value="alr"/>
    <property type="match status" value="1"/>
</dbReference>
<dbReference type="PANTHER" id="PTHR30511">
    <property type="entry name" value="ALANINE RACEMASE"/>
    <property type="match status" value="1"/>
</dbReference>
<dbReference type="PANTHER" id="PTHR30511:SF0">
    <property type="entry name" value="ALANINE RACEMASE, CATABOLIC-RELATED"/>
    <property type="match status" value="1"/>
</dbReference>
<dbReference type="Pfam" id="PF00842">
    <property type="entry name" value="Ala_racemase_C"/>
    <property type="match status" value="1"/>
</dbReference>
<dbReference type="Pfam" id="PF01168">
    <property type="entry name" value="Ala_racemase_N"/>
    <property type="match status" value="1"/>
</dbReference>
<dbReference type="PRINTS" id="PR00992">
    <property type="entry name" value="ALARACEMASE"/>
</dbReference>
<dbReference type="SMART" id="SM01005">
    <property type="entry name" value="Ala_racemase_C"/>
    <property type="match status" value="1"/>
</dbReference>
<dbReference type="SUPFAM" id="SSF50621">
    <property type="entry name" value="Alanine racemase C-terminal domain-like"/>
    <property type="match status" value="1"/>
</dbReference>
<dbReference type="SUPFAM" id="SSF51419">
    <property type="entry name" value="PLP-binding barrel"/>
    <property type="match status" value="1"/>
</dbReference>
<dbReference type="PROSITE" id="PS00395">
    <property type="entry name" value="ALANINE_RACEMASE"/>
    <property type="match status" value="1"/>
</dbReference>
<feature type="chain" id="PRO_1000138601" description="Alanine racemase">
    <location>
        <begin position="1"/>
        <end position="377"/>
    </location>
</feature>
<feature type="active site" description="Proton acceptor; specific for D-alanine" evidence="1">
    <location>
        <position position="37"/>
    </location>
</feature>
<feature type="active site" description="Proton acceptor; specific for L-alanine" evidence="1">
    <location>
        <position position="271"/>
    </location>
</feature>
<feature type="binding site" evidence="1">
    <location>
        <position position="135"/>
    </location>
    <ligand>
        <name>substrate</name>
    </ligand>
</feature>
<feature type="binding site" evidence="1">
    <location>
        <position position="319"/>
    </location>
    <ligand>
        <name>substrate</name>
    </ligand>
</feature>
<feature type="modified residue" description="N6-(pyridoxal phosphate)lysine" evidence="1">
    <location>
        <position position="37"/>
    </location>
</feature>
<reference key="1">
    <citation type="submission" date="2008-10" db="EMBL/GenBank/DDBJ databases">
        <title>The complete genome sequence of Helicobacter pylori strain P12.</title>
        <authorList>
            <person name="Fischer W."/>
            <person name="Windhager L."/>
            <person name="Karnholz A."/>
            <person name="Zeiller M."/>
            <person name="Zimmer R."/>
            <person name="Haas R."/>
        </authorList>
    </citation>
    <scope>NUCLEOTIDE SEQUENCE [LARGE SCALE GENOMIC DNA]</scope>
    <source>
        <strain>P12</strain>
    </source>
</reference>
<comment type="function">
    <text evidence="1">Catalyzes the interconversion of L-alanine and D-alanine. May also act on other amino acids.</text>
</comment>
<comment type="catalytic activity">
    <reaction evidence="1">
        <text>L-alanine = D-alanine</text>
        <dbReference type="Rhea" id="RHEA:20249"/>
        <dbReference type="ChEBI" id="CHEBI:57416"/>
        <dbReference type="ChEBI" id="CHEBI:57972"/>
        <dbReference type="EC" id="5.1.1.1"/>
    </reaction>
</comment>
<comment type="cofactor">
    <cofactor evidence="1">
        <name>pyridoxal 5'-phosphate</name>
        <dbReference type="ChEBI" id="CHEBI:597326"/>
    </cofactor>
</comment>
<comment type="pathway">
    <text evidence="1">Amino-acid biosynthesis; D-alanine biosynthesis; D-alanine from L-alanine: step 1/1.</text>
</comment>
<comment type="similarity">
    <text evidence="1">Belongs to the alanine racemase family.</text>
</comment>
<evidence type="ECO:0000255" key="1">
    <source>
        <dbReference type="HAMAP-Rule" id="MF_01201"/>
    </source>
</evidence>
<keyword id="KW-0413">Isomerase</keyword>
<keyword id="KW-0663">Pyridoxal phosphate</keyword>